<name>RS16_ORYSI</name>
<feature type="chain" id="PRO_0000302057" description="Small ribosomal subunit protein uS9">
    <location>
        <begin position="1"/>
        <end position="149"/>
    </location>
</feature>
<feature type="sequence conflict" description="In Ref. 1; AAA33916." evidence="1" ref="1">
    <original>T</original>
    <variation>A</variation>
    <location>
        <position position="21"/>
    </location>
</feature>
<feature type="sequence conflict" description="In Ref. 1; AAA33916." evidence="1" ref="1">
    <original>G</original>
    <variation>R</variation>
    <location>
        <position position="139"/>
    </location>
</feature>
<keyword id="KW-0963">Cytoplasm</keyword>
<keyword id="KW-1185">Reference proteome</keyword>
<keyword id="KW-0687">Ribonucleoprotein</keyword>
<keyword id="KW-0689">Ribosomal protein</keyword>
<protein>
    <recommendedName>
        <fullName evidence="1">Small ribosomal subunit protein uS9</fullName>
    </recommendedName>
    <alternativeName>
        <fullName>40S ribosomal protein S16</fullName>
    </alternativeName>
</protein>
<proteinExistence type="evidence at transcript level"/>
<dbReference type="EMBL" id="L36313">
    <property type="protein sequence ID" value="AAA33916.1"/>
    <property type="molecule type" value="mRNA"/>
</dbReference>
<dbReference type="EMBL" id="CM000136">
    <property type="protein sequence ID" value="EAY79784.1"/>
    <property type="molecule type" value="Genomic_DNA"/>
</dbReference>
<dbReference type="EMBL" id="CM000137">
    <property type="protein sequence ID" value="EAY82113.1"/>
    <property type="molecule type" value="Genomic_DNA"/>
</dbReference>
<dbReference type="PIR" id="T04083">
    <property type="entry name" value="T04083"/>
</dbReference>
<dbReference type="SMR" id="A2ZB00"/>
<dbReference type="STRING" id="39946.A2ZB00"/>
<dbReference type="EnsemblPlants" id="BGIOSGA034584-TA">
    <property type="protein sequence ID" value="BGIOSGA034584-PA"/>
    <property type="gene ID" value="BGIOSGA034584"/>
</dbReference>
<dbReference type="EnsemblPlants" id="BGIOSGA036719-TA">
    <property type="protein sequence ID" value="BGIOSGA036719-PA"/>
    <property type="gene ID" value="BGIOSGA036719"/>
</dbReference>
<dbReference type="EnsemblPlants" id="OsGoSa_11g0001790.01">
    <property type="protein sequence ID" value="OsGoSa_11g0001790.01"/>
    <property type="gene ID" value="OsGoSa_11g0001790"/>
</dbReference>
<dbReference type="EnsemblPlants" id="OsGoSa_12g0001740.01">
    <property type="protein sequence ID" value="OsGoSa_12g0001740.01"/>
    <property type="gene ID" value="OsGoSa_12g0001740"/>
</dbReference>
<dbReference type="EnsemblPlants" id="OsIR64_11g0001750.02">
    <property type="protein sequence ID" value="OsIR64_11g0001750.02"/>
    <property type="gene ID" value="OsIR64_11g0001750"/>
</dbReference>
<dbReference type="EnsemblPlants" id="OsIR64_12g0001710.01">
    <property type="protein sequence ID" value="OsIR64_12g0001710.01"/>
    <property type="gene ID" value="OsIR64_12g0001710"/>
</dbReference>
<dbReference type="EnsemblPlants" id="OsKYG_11g0001800.02">
    <property type="protein sequence ID" value="OsKYG_11g0001800.02"/>
    <property type="gene ID" value="OsKYG_11g0001800"/>
</dbReference>
<dbReference type="EnsemblPlants" id="OsKYG_12g0001760.01">
    <property type="protein sequence ID" value="OsKYG_12g0001760.01"/>
    <property type="gene ID" value="OsKYG_12g0001760"/>
</dbReference>
<dbReference type="EnsemblPlants" id="OsLaMu_11g0001790.02">
    <property type="protein sequence ID" value="OsLaMu_11g0001790.02"/>
    <property type="gene ID" value="OsLaMu_11g0001790"/>
</dbReference>
<dbReference type="EnsemblPlants" id="OsLaMu_12g0001540.01">
    <property type="protein sequence ID" value="OsLaMu_12g0001540.01"/>
    <property type="gene ID" value="OsLaMu_12g0001540"/>
</dbReference>
<dbReference type="EnsemblPlants" id="OsLima_11g0001630.01">
    <property type="protein sequence ID" value="OsLima_11g0001630.01"/>
    <property type="gene ID" value="OsLima_11g0001630"/>
</dbReference>
<dbReference type="EnsemblPlants" id="OsLima_12g0001600.01">
    <property type="protein sequence ID" value="OsLima_12g0001600.01"/>
    <property type="gene ID" value="OsLima_12g0001600"/>
</dbReference>
<dbReference type="EnsemblPlants" id="OsLiXu_11g0001720.01">
    <property type="protein sequence ID" value="OsLiXu_11g0001720.01"/>
    <property type="gene ID" value="OsLiXu_11g0001720"/>
</dbReference>
<dbReference type="EnsemblPlants" id="OsLiXu_12g0001710.01">
    <property type="protein sequence ID" value="OsLiXu_12g0001710.01"/>
    <property type="gene ID" value="OsLiXu_12g0001710"/>
</dbReference>
<dbReference type="EnsemblPlants" id="OsMH63_11G001760_02">
    <property type="protein sequence ID" value="OsMH63_11G001760_02"/>
    <property type="gene ID" value="OsMH63_11G001760"/>
</dbReference>
<dbReference type="EnsemblPlants" id="OsMH63_12G001750_01">
    <property type="protein sequence ID" value="OsMH63_12G001750_01"/>
    <property type="gene ID" value="OsMH63_12G001750"/>
</dbReference>
<dbReference type="EnsemblPlants" id="OsPr106_11g0001740.02">
    <property type="protein sequence ID" value="OsPr106_11g0001740.02"/>
    <property type="gene ID" value="OsPr106_11g0001740"/>
</dbReference>
<dbReference type="EnsemblPlants" id="OsPr106_12g0001720.01">
    <property type="protein sequence ID" value="OsPr106_12g0001720.01"/>
    <property type="gene ID" value="OsPr106_12g0001720"/>
</dbReference>
<dbReference type="EnsemblPlants" id="OsZS97_11G001730_01">
    <property type="protein sequence ID" value="OsZS97_11G001730_01"/>
    <property type="gene ID" value="OsZS97_11G001730"/>
</dbReference>
<dbReference type="EnsemblPlants" id="OsZS97_12G001690_01">
    <property type="protein sequence ID" value="OsZS97_12G001690_01"/>
    <property type="gene ID" value="OsZS97_12G001690"/>
</dbReference>
<dbReference type="Gramene" id="BGIOSGA034584-TA">
    <property type="protein sequence ID" value="BGIOSGA034584-PA"/>
    <property type="gene ID" value="BGIOSGA034584"/>
</dbReference>
<dbReference type="Gramene" id="BGIOSGA036719-TA">
    <property type="protein sequence ID" value="BGIOSGA036719-PA"/>
    <property type="gene ID" value="BGIOSGA036719"/>
</dbReference>
<dbReference type="Gramene" id="OsGoSa_11g0001790.01">
    <property type="protein sequence ID" value="OsGoSa_11g0001790.01"/>
    <property type="gene ID" value="OsGoSa_11g0001790"/>
</dbReference>
<dbReference type="Gramene" id="OsGoSa_12g0001740.01">
    <property type="protein sequence ID" value="OsGoSa_12g0001740.01"/>
    <property type="gene ID" value="OsGoSa_12g0001740"/>
</dbReference>
<dbReference type="Gramene" id="OsIR64_11g0001750.02">
    <property type="protein sequence ID" value="OsIR64_11g0001750.02"/>
    <property type="gene ID" value="OsIR64_11g0001750"/>
</dbReference>
<dbReference type="Gramene" id="OsIR64_12g0001710.01">
    <property type="protein sequence ID" value="OsIR64_12g0001710.01"/>
    <property type="gene ID" value="OsIR64_12g0001710"/>
</dbReference>
<dbReference type="Gramene" id="OsKYG_11g0001800.02">
    <property type="protein sequence ID" value="OsKYG_11g0001800.02"/>
    <property type="gene ID" value="OsKYG_11g0001800"/>
</dbReference>
<dbReference type="Gramene" id="OsKYG_12g0001760.01">
    <property type="protein sequence ID" value="OsKYG_12g0001760.01"/>
    <property type="gene ID" value="OsKYG_12g0001760"/>
</dbReference>
<dbReference type="Gramene" id="OsLaMu_11g0001790.02">
    <property type="protein sequence ID" value="OsLaMu_11g0001790.02"/>
    <property type="gene ID" value="OsLaMu_11g0001790"/>
</dbReference>
<dbReference type="Gramene" id="OsLaMu_12g0001540.01">
    <property type="protein sequence ID" value="OsLaMu_12g0001540.01"/>
    <property type="gene ID" value="OsLaMu_12g0001540"/>
</dbReference>
<dbReference type="Gramene" id="OsLima_11g0001630.01">
    <property type="protein sequence ID" value="OsLima_11g0001630.01"/>
    <property type="gene ID" value="OsLima_11g0001630"/>
</dbReference>
<dbReference type="Gramene" id="OsLima_12g0001600.01">
    <property type="protein sequence ID" value="OsLima_12g0001600.01"/>
    <property type="gene ID" value="OsLima_12g0001600"/>
</dbReference>
<dbReference type="Gramene" id="OsLiXu_11g0001720.01">
    <property type="protein sequence ID" value="OsLiXu_11g0001720.01"/>
    <property type="gene ID" value="OsLiXu_11g0001720"/>
</dbReference>
<dbReference type="Gramene" id="OsLiXu_12g0001710.01">
    <property type="protein sequence ID" value="OsLiXu_12g0001710.01"/>
    <property type="gene ID" value="OsLiXu_12g0001710"/>
</dbReference>
<dbReference type="Gramene" id="OsMH63_11G001760_02">
    <property type="protein sequence ID" value="OsMH63_11G001760_02"/>
    <property type="gene ID" value="OsMH63_11G001760"/>
</dbReference>
<dbReference type="Gramene" id="OsMH63_12G001750_01">
    <property type="protein sequence ID" value="OsMH63_12G001750_01"/>
    <property type="gene ID" value="OsMH63_12G001750"/>
</dbReference>
<dbReference type="Gramene" id="OsPr106_11g0001740.02">
    <property type="protein sequence ID" value="OsPr106_11g0001740.02"/>
    <property type="gene ID" value="OsPr106_11g0001740"/>
</dbReference>
<dbReference type="Gramene" id="OsPr106_12g0001720.01">
    <property type="protein sequence ID" value="OsPr106_12g0001720.01"/>
    <property type="gene ID" value="OsPr106_12g0001720"/>
</dbReference>
<dbReference type="Gramene" id="OsZS97_11G001730_01">
    <property type="protein sequence ID" value="OsZS97_11G001730_01"/>
    <property type="gene ID" value="OsZS97_11G001730"/>
</dbReference>
<dbReference type="Gramene" id="OsZS97_12G001690_01">
    <property type="protein sequence ID" value="OsZS97_12G001690_01"/>
    <property type="gene ID" value="OsZS97_12G001690"/>
</dbReference>
<dbReference type="HOGENOM" id="CLU_046483_4_0_1"/>
<dbReference type="OMA" id="WPIEMAR"/>
<dbReference type="OrthoDB" id="593926at2759"/>
<dbReference type="Proteomes" id="UP000007015">
    <property type="component" value="Chromosome 11"/>
</dbReference>
<dbReference type="Proteomes" id="UP000007015">
    <property type="component" value="Chromosome 12"/>
</dbReference>
<dbReference type="GO" id="GO:0022627">
    <property type="term" value="C:cytosolic small ribosomal subunit"/>
    <property type="evidence" value="ECO:0007669"/>
    <property type="project" value="TreeGrafter"/>
</dbReference>
<dbReference type="GO" id="GO:0003723">
    <property type="term" value="F:RNA binding"/>
    <property type="evidence" value="ECO:0007669"/>
    <property type="project" value="TreeGrafter"/>
</dbReference>
<dbReference type="GO" id="GO:0003735">
    <property type="term" value="F:structural constituent of ribosome"/>
    <property type="evidence" value="ECO:0007669"/>
    <property type="project" value="InterPro"/>
</dbReference>
<dbReference type="GO" id="GO:0000462">
    <property type="term" value="P:maturation of SSU-rRNA from tricistronic rRNA transcript (SSU-rRNA, 5.8S rRNA, LSU-rRNA)"/>
    <property type="evidence" value="ECO:0007669"/>
    <property type="project" value="TreeGrafter"/>
</dbReference>
<dbReference type="GO" id="GO:0006412">
    <property type="term" value="P:translation"/>
    <property type="evidence" value="ECO:0007669"/>
    <property type="project" value="InterPro"/>
</dbReference>
<dbReference type="FunFam" id="3.30.230.10:FF:000007">
    <property type="entry name" value="40S ribosomal protein S16"/>
    <property type="match status" value="1"/>
</dbReference>
<dbReference type="Gene3D" id="3.30.230.10">
    <property type="match status" value="1"/>
</dbReference>
<dbReference type="InterPro" id="IPR020568">
    <property type="entry name" value="Ribosomal_Su5_D2-typ_SF"/>
</dbReference>
<dbReference type="InterPro" id="IPR000754">
    <property type="entry name" value="Ribosomal_uS9"/>
</dbReference>
<dbReference type="InterPro" id="IPR020574">
    <property type="entry name" value="Ribosomal_uS9_CS"/>
</dbReference>
<dbReference type="InterPro" id="IPR014721">
    <property type="entry name" value="Ribsml_uS5_D2-typ_fold_subgr"/>
</dbReference>
<dbReference type="NCBIfam" id="NF001749">
    <property type="entry name" value="PRK00474.1"/>
    <property type="match status" value="1"/>
</dbReference>
<dbReference type="PANTHER" id="PTHR21569:SF16">
    <property type="entry name" value="RIBOSOMAL PROTEIN S16"/>
    <property type="match status" value="1"/>
</dbReference>
<dbReference type="PANTHER" id="PTHR21569">
    <property type="entry name" value="RIBOSOMAL PROTEIN S9"/>
    <property type="match status" value="1"/>
</dbReference>
<dbReference type="Pfam" id="PF00380">
    <property type="entry name" value="Ribosomal_S9"/>
    <property type="match status" value="1"/>
</dbReference>
<dbReference type="SUPFAM" id="SSF54211">
    <property type="entry name" value="Ribosomal protein S5 domain 2-like"/>
    <property type="match status" value="1"/>
</dbReference>
<dbReference type="PROSITE" id="PS00360">
    <property type="entry name" value="RIBOSOMAL_S9"/>
    <property type="match status" value="1"/>
</dbReference>
<reference key="1">
    <citation type="journal article" date="1995" name="Plant Physiol.">
        <title>Characterization of a cDNA encoding ribosomal protein S16 in rice.</title>
        <authorList>
            <person name="Zhao Y."/>
            <person name="Watson J.C."/>
            <person name="Kung S.D."/>
            <person name="Bottino P.J."/>
        </authorList>
    </citation>
    <scope>NUCLEOTIDE SEQUENCE [MRNA]</scope>
    <source>
        <strain>cv. IR36</strain>
    </source>
</reference>
<reference key="2">
    <citation type="journal article" date="2005" name="PLoS Biol.">
        <title>The genomes of Oryza sativa: a history of duplications.</title>
        <authorList>
            <person name="Yu J."/>
            <person name="Wang J."/>
            <person name="Lin W."/>
            <person name="Li S."/>
            <person name="Li H."/>
            <person name="Zhou J."/>
            <person name="Ni P."/>
            <person name="Dong W."/>
            <person name="Hu S."/>
            <person name="Zeng C."/>
            <person name="Zhang J."/>
            <person name="Zhang Y."/>
            <person name="Li R."/>
            <person name="Xu Z."/>
            <person name="Li S."/>
            <person name="Li X."/>
            <person name="Zheng H."/>
            <person name="Cong L."/>
            <person name="Lin L."/>
            <person name="Yin J."/>
            <person name="Geng J."/>
            <person name="Li G."/>
            <person name="Shi J."/>
            <person name="Liu J."/>
            <person name="Lv H."/>
            <person name="Li J."/>
            <person name="Wang J."/>
            <person name="Deng Y."/>
            <person name="Ran L."/>
            <person name="Shi X."/>
            <person name="Wang X."/>
            <person name="Wu Q."/>
            <person name="Li C."/>
            <person name="Ren X."/>
            <person name="Wang J."/>
            <person name="Wang X."/>
            <person name="Li D."/>
            <person name="Liu D."/>
            <person name="Zhang X."/>
            <person name="Ji Z."/>
            <person name="Zhao W."/>
            <person name="Sun Y."/>
            <person name="Zhang Z."/>
            <person name="Bao J."/>
            <person name="Han Y."/>
            <person name="Dong L."/>
            <person name="Ji J."/>
            <person name="Chen P."/>
            <person name="Wu S."/>
            <person name="Liu J."/>
            <person name="Xiao Y."/>
            <person name="Bu D."/>
            <person name="Tan J."/>
            <person name="Yang L."/>
            <person name="Ye C."/>
            <person name="Zhang J."/>
            <person name="Xu J."/>
            <person name="Zhou Y."/>
            <person name="Yu Y."/>
            <person name="Zhang B."/>
            <person name="Zhuang S."/>
            <person name="Wei H."/>
            <person name="Liu B."/>
            <person name="Lei M."/>
            <person name="Yu H."/>
            <person name="Li Y."/>
            <person name="Xu H."/>
            <person name="Wei S."/>
            <person name="He X."/>
            <person name="Fang L."/>
            <person name="Zhang Z."/>
            <person name="Zhang Y."/>
            <person name="Huang X."/>
            <person name="Su Z."/>
            <person name="Tong W."/>
            <person name="Li J."/>
            <person name="Tong Z."/>
            <person name="Li S."/>
            <person name="Ye J."/>
            <person name="Wang L."/>
            <person name="Fang L."/>
            <person name="Lei T."/>
            <person name="Chen C.-S."/>
            <person name="Chen H.-C."/>
            <person name="Xu Z."/>
            <person name="Li H."/>
            <person name="Huang H."/>
            <person name="Zhang F."/>
            <person name="Xu H."/>
            <person name="Li N."/>
            <person name="Zhao C."/>
            <person name="Li S."/>
            <person name="Dong L."/>
            <person name="Huang Y."/>
            <person name="Li L."/>
            <person name="Xi Y."/>
            <person name="Qi Q."/>
            <person name="Li W."/>
            <person name="Zhang B."/>
            <person name="Hu W."/>
            <person name="Zhang Y."/>
            <person name="Tian X."/>
            <person name="Jiao Y."/>
            <person name="Liang X."/>
            <person name="Jin J."/>
            <person name="Gao L."/>
            <person name="Zheng W."/>
            <person name="Hao B."/>
            <person name="Liu S.-M."/>
            <person name="Wang W."/>
            <person name="Yuan L."/>
            <person name="Cao M."/>
            <person name="McDermott J."/>
            <person name="Samudrala R."/>
            <person name="Wang J."/>
            <person name="Wong G.K.-S."/>
            <person name="Yang H."/>
        </authorList>
    </citation>
    <scope>NUCLEOTIDE SEQUENCE [LARGE SCALE GENOMIC DNA]</scope>
    <source>
        <strain>cv. 93-11</strain>
    </source>
</reference>
<accession>A2ZB00</accession>
<accession>P46294</accession>
<accession>Q2QYC7</accession>
<organism>
    <name type="scientific">Oryza sativa subsp. indica</name>
    <name type="common">Rice</name>
    <dbReference type="NCBI Taxonomy" id="39946"/>
    <lineage>
        <taxon>Eukaryota</taxon>
        <taxon>Viridiplantae</taxon>
        <taxon>Streptophyta</taxon>
        <taxon>Embryophyta</taxon>
        <taxon>Tracheophyta</taxon>
        <taxon>Spermatophyta</taxon>
        <taxon>Magnoliopsida</taxon>
        <taxon>Liliopsida</taxon>
        <taxon>Poales</taxon>
        <taxon>Poaceae</taxon>
        <taxon>BOP clade</taxon>
        <taxon>Oryzoideae</taxon>
        <taxon>Oryzeae</taxon>
        <taxon>Oryzinae</taxon>
        <taxon>Oryza</taxon>
        <taxon>Oryza sativa</taxon>
    </lineage>
</organism>
<sequence length="149" mass="16819">MAAALTRPPPGTVQCFGRKKTAVAVSYCKPGRGLIKVNGVPIELIRPEMLRLKAFEPILLAGRSRFKDIDMRIRVRGGGKTSQIYAIRQAIAKALVAYYQKYVDEASKKEVKDIFARYDRTLLVADPRRCEPKKFGGRGARARFQKSYR</sequence>
<comment type="subcellular location">
    <subcellularLocation>
        <location>Cytoplasm</location>
    </subcellularLocation>
</comment>
<comment type="similarity">
    <text evidence="1">Belongs to the universal ribosomal protein uS9 family.</text>
</comment>
<evidence type="ECO:0000305" key="1"/>
<gene>
    <name type="primary">RPS16A</name>
    <name type="ORF">OsI_033743</name>
</gene>
<gene>
    <name type="primary">RPS16B</name>
    <name type="ORF">OsI_036072</name>
</gene>